<dbReference type="EMBL" id="AK053685">
    <property type="protein sequence ID" value="BAC35473.1"/>
    <property type="molecule type" value="mRNA"/>
</dbReference>
<dbReference type="EMBL" id="AC133585">
    <property type="status" value="NOT_ANNOTATED_CDS"/>
    <property type="molecule type" value="Genomic_DNA"/>
</dbReference>
<dbReference type="EMBL" id="CH466573">
    <property type="protein sequence ID" value="EDL24847.1"/>
    <property type="molecule type" value="Genomic_DNA"/>
</dbReference>
<dbReference type="CCDS" id="CCDS26923.1"/>
<dbReference type="RefSeq" id="NP_848906.1">
    <property type="nucleotide sequence ID" value="NM_178791.5"/>
</dbReference>
<dbReference type="FunCoup" id="T1NXB5">
    <property type="interactions" value="551"/>
</dbReference>
<dbReference type="STRING" id="10090.ENSMUSP00000055178"/>
<dbReference type="GlyCosmos" id="T1NXB5">
    <property type="glycosylation" value="3 sites, No reported glycans"/>
</dbReference>
<dbReference type="GlyGen" id="T1NXB5">
    <property type="glycosylation" value="3 sites"/>
</dbReference>
<dbReference type="iPTMnet" id="T1NXB5"/>
<dbReference type="PhosphoSitePlus" id="T1NXB5"/>
<dbReference type="PaxDb" id="10090-ENSMUSP00000055178"/>
<dbReference type="ProteomicsDB" id="297613"/>
<dbReference type="Antibodypedia" id="49933">
    <property type="antibodies" value="57 antibodies from 14 providers"/>
</dbReference>
<dbReference type="DNASU" id="320736"/>
<dbReference type="Ensembl" id="ENSMUST00000053175.13">
    <property type="protein sequence ID" value="ENSMUSP00000055178.6"/>
    <property type="gene ID" value="ENSMUSG00000050666.15"/>
</dbReference>
<dbReference type="GeneID" id="320736"/>
<dbReference type="KEGG" id="mmu:320736"/>
<dbReference type="UCSC" id="uc007szj.1">
    <property type="organism name" value="mouse"/>
</dbReference>
<dbReference type="AGR" id="MGI:2444633"/>
<dbReference type="CTD" id="196740"/>
<dbReference type="MGI" id="MGI:2444633">
    <property type="gene designation" value="Vstm4"/>
</dbReference>
<dbReference type="VEuPathDB" id="HostDB:ENSMUSG00000050666"/>
<dbReference type="eggNOG" id="ENOG502QUVT">
    <property type="taxonomic scope" value="Eukaryota"/>
</dbReference>
<dbReference type="GeneTree" id="ENSGT00390000008566"/>
<dbReference type="HOGENOM" id="CLU_060467_0_0_1"/>
<dbReference type="InParanoid" id="T1NXB5"/>
<dbReference type="OMA" id="LTCQYLH"/>
<dbReference type="OrthoDB" id="8885867at2759"/>
<dbReference type="BioGRID-ORCS" id="320736">
    <property type="hits" value="3 hits in 77 CRISPR screens"/>
</dbReference>
<dbReference type="PRO" id="PR:T1NXB5"/>
<dbReference type="Proteomes" id="UP000000589">
    <property type="component" value="Chromosome 14"/>
</dbReference>
<dbReference type="RNAct" id="T1NXB5">
    <property type="molecule type" value="protein"/>
</dbReference>
<dbReference type="Bgee" id="ENSMUSG00000050666">
    <property type="expression patterns" value="Expressed in otolith organ and 159 other cell types or tissues"/>
</dbReference>
<dbReference type="GO" id="GO:0005576">
    <property type="term" value="C:extracellular region"/>
    <property type="evidence" value="ECO:0007669"/>
    <property type="project" value="UniProtKB-SubCell"/>
</dbReference>
<dbReference type="GO" id="GO:0005886">
    <property type="term" value="C:plasma membrane"/>
    <property type="evidence" value="ECO:0007669"/>
    <property type="project" value="UniProtKB-SubCell"/>
</dbReference>
<dbReference type="GO" id="GO:0043542">
    <property type="term" value="P:endothelial cell migration"/>
    <property type="evidence" value="ECO:0000314"/>
    <property type="project" value="MGI"/>
</dbReference>
<dbReference type="GO" id="GO:0001935">
    <property type="term" value="P:endothelial cell proliferation"/>
    <property type="evidence" value="ECO:0000315"/>
    <property type="project" value="MGI"/>
</dbReference>
<dbReference type="GO" id="GO:0097601">
    <property type="term" value="P:retina blood vessel maintenance"/>
    <property type="evidence" value="ECO:0000315"/>
    <property type="project" value="MGI"/>
</dbReference>
<dbReference type="GO" id="GO:0061298">
    <property type="term" value="P:retina vasculature development in camera-type eye"/>
    <property type="evidence" value="ECO:0000314"/>
    <property type="project" value="MGI"/>
</dbReference>
<dbReference type="GO" id="GO:0002040">
    <property type="term" value="P:sprouting angiogenesis"/>
    <property type="evidence" value="ECO:0000314"/>
    <property type="project" value="MGI"/>
</dbReference>
<dbReference type="GO" id="GO:0042311">
    <property type="term" value="P:vasodilation"/>
    <property type="evidence" value="ECO:0000314"/>
    <property type="project" value="MGI"/>
</dbReference>
<dbReference type="FunFam" id="2.60.40.10:FF:000667">
    <property type="entry name" value="V-set and transmembrane domain containing 4"/>
    <property type="match status" value="1"/>
</dbReference>
<dbReference type="Gene3D" id="2.60.40.10">
    <property type="entry name" value="Immunoglobulins"/>
    <property type="match status" value="1"/>
</dbReference>
<dbReference type="InterPro" id="IPR007110">
    <property type="entry name" value="Ig-like_dom"/>
</dbReference>
<dbReference type="InterPro" id="IPR036179">
    <property type="entry name" value="Ig-like_dom_sf"/>
</dbReference>
<dbReference type="InterPro" id="IPR013783">
    <property type="entry name" value="Ig-like_fold"/>
</dbReference>
<dbReference type="InterPro" id="IPR013106">
    <property type="entry name" value="Ig_V-set"/>
</dbReference>
<dbReference type="InterPro" id="IPR051102">
    <property type="entry name" value="IgSF_V-set/TM_domain"/>
</dbReference>
<dbReference type="PANTHER" id="PTHR12207">
    <property type="entry name" value="V-SET AND TRANSMEMBRANE DOMAIN-CONTAINING PROTEIN"/>
    <property type="match status" value="1"/>
</dbReference>
<dbReference type="PANTHER" id="PTHR12207:SF8">
    <property type="entry name" value="V-SET AND TRANSMEMBRANE DOMAIN-CONTAINING PROTEIN 4"/>
    <property type="match status" value="1"/>
</dbReference>
<dbReference type="Pfam" id="PF07686">
    <property type="entry name" value="V-set"/>
    <property type="match status" value="1"/>
</dbReference>
<dbReference type="SUPFAM" id="SSF48726">
    <property type="entry name" value="Immunoglobulin"/>
    <property type="match status" value="1"/>
</dbReference>
<dbReference type="PROSITE" id="PS50835">
    <property type="entry name" value="IG_LIKE"/>
    <property type="match status" value="1"/>
</dbReference>
<proteinExistence type="evidence at protein level"/>
<sequence>MRLRLLALAAAVLLGPAPEVCGALNVTVSPGPVVDYLEGENATLLCHVSQKRRKDSLLAVRWFFAPDGSQEALMVKMTKLRIIQYYGNFSRTANQQRLRLLEERRGVLYRLSVLTLRPTDQGQYVCKVQEISKHRNKWTAWSNGSSATEMRVISLKAGEDSSFEKKKVTWAFFEDLYVYAVLVCCVGILSVLLFTLVIAWQSVFHKRKSRVRHYLVKCPQNSSGETVTSVTSLAPLQPQKGKRQKKKVDVPPAVPAKAPIATTFHKPKLLKPQRKVALPKITEENLTYAELELIKPHRAAKGVPTSTVYAQILFEENQL</sequence>
<evidence type="ECO:0000255" key="1"/>
<evidence type="ECO:0000255" key="2">
    <source>
        <dbReference type="PROSITE-ProRule" id="PRU00114"/>
    </source>
</evidence>
<evidence type="ECO:0000269" key="3">
    <source>
    </source>
</evidence>
<evidence type="ECO:0000305" key="4"/>
<reference key="1">
    <citation type="journal article" date="2005" name="Science">
        <title>The transcriptional landscape of the mammalian genome.</title>
        <authorList>
            <person name="Carninci P."/>
            <person name="Kasukawa T."/>
            <person name="Katayama S."/>
            <person name="Gough J."/>
            <person name="Frith M.C."/>
            <person name="Maeda N."/>
            <person name="Oyama R."/>
            <person name="Ravasi T."/>
            <person name="Lenhard B."/>
            <person name="Wells C."/>
            <person name="Kodzius R."/>
            <person name="Shimokawa K."/>
            <person name="Bajic V.B."/>
            <person name="Brenner S.E."/>
            <person name="Batalov S."/>
            <person name="Forrest A.R."/>
            <person name="Zavolan M."/>
            <person name="Davis M.J."/>
            <person name="Wilming L.G."/>
            <person name="Aidinis V."/>
            <person name="Allen J.E."/>
            <person name="Ambesi-Impiombato A."/>
            <person name="Apweiler R."/>
            <person name="Aturaliya R.N."/>
            <person name="Bailey T.L."/>
            <person name="Bansal M."/>
            <person name="Baxter L."/>
            <person name="Beisel K.W."/>
            <person name="Bersano T."/>
            <person name="Bono H."/>
            <person name="Chalk A.M."/>
            <person name="Chiu K.P."/>
            <person name="Choudhary V."/>
            <person name="Christoffels A."/>
            <person name="Clutterbuck D.R."/>
            <person name="Crowe M.L."/>
            <person name="Dalla E."/>
            <person name="Dalrymple B.P."/>
            <person name="de Bono B."/>
            <person name="Della Gatta G."/>
            <person name="di Bernardo D."/>
            <person name="Down T."/>
            <person name="Engstrom P."/>
            <person name="Fagiolini M."/>
            <person name="Faulkner G."/>
            <person name="Fletcher C.F."/>
            <person name="Fukushima T."/>
            <person name="Furuno M."/>
            <person name="Futaki S."/>
            <person name="Gariboldi M."/>
            <person name="Georgii-Hemming P."/>
            <person name="Gingeras T.R."/>
            <person name="Gojobori T."/>
            <person name="Green R.E."/>
            <person name="Gustincich S."/>
            <person name="Harbers M."/>
            <person name="Hayashi Y."/>
            <person name="Hensch T.K."/>
            <person name="Hirokawa N."/>
            <person name="Hill D."/>
            <person name="Huminiecki L."/>
            <person name="Iacono M."/>
            <person name="Ikeo K."/>
            <person name="Iwama A."/>
            <person name="Ishikawa T."/>
            <person name="Jakt M."/>
            <person name="Kanapin A."/>
            <person name="Katoh M."/>
            <person name="Kawasawa Y."/>
            <person name="Kelso J."/>
            <person name="Kitamura H."/>
            <person name="Kitano H."/>
            <person name="Kollias G."/>
            <person name="Krishnan S.P."/>
            <person name="Kruger A."/>
            <person name="Kummerfeld S.K."/>
            <person name="Kurochkin I.V."/>
            <person name="Lareau L.F."/>
            <person name="Lazarevic D."/>
            <person name="Lipovich L."/>
            <person name="Liu J."/>
            <person name="Liuni S."/>
            <person name="McWilliam S."/>
            <person name="Madan Babu M."/>
            <person name="Madera M."/>
            <person name="Marchionni L."/>
            <person name="Matsuda H."/>
            <person name="Matsuzawa S."/>
            <person name="Miki H."/>
            <person name="Mignone F."/>
            <person name="Miyake S."/>
            <person name="Morris K."/>
            <person name="Mottagui-Tabar S."/>
            <person name="Mulder N."/>
            <person name="Nakano N."/>
            <person name="Nakauchi H."/>
            <person name="Ng P."/>
            <person name="Nilsson R."/>
            <person name="Nishiguchi S."/>
            <person name="Nishikawa S."/>
            <person name="Nori F."/>
            <person name="Ohara O."/>
            <person name="Okazaki Y."/>
            <person name="Orlando V."/>
            <person name="Pang K.C."/>
            <person name="Pavan W.J."/>
            <person name="Pavesi G."/>
            <person name="Pesole G."/>
            <person name="Petrovsky N."/>
            <person name="Piazza S."/>
            <person name="Reed J."/>
            <person name="Reid J.F."/>
            <person name="Ring B.Z."/>
            <person name="Ringwald M."/>
            <person name="Rost B."/>
            <person name="Ruan Y."/>
            <person name="Salzberg S.L."/>
            <person name="Sandelin A."/>
            <person name="Schneider C."/>
            <person name="Schoenbach C."/>
            <person name="Sekiguchi K."/>
            <person name="Semple C.A."/>
            <person name="Seno S."/>
            <person name="Sessa L."/>
            <person name="Sheng Y."/>
            <person name="Shibata Y."/>
            <person name="Shimada H."/>
            <person name="Shimada K."/>
            <person name="Silva D."/>
            <person name="Sinclair B."/>
            <person name="Sperling S."/>
            <person name="Stupka E."/>
            <person name="Sugiura K."/>
            <person name="Sultana R."/>
            <person name="Takenaka Y."/>
            <person name="Taki K."/>
            <person name="Tammoja K."/>
            <person name="Tan S.L."/>
            <person name="Tang S."/>
            <person name="Taylor M.S."/>
            <person name="Tegner J."/>
            <person name="Teichmann S.A."/>
            <person name="Ueda H.R."/>
            <person name="van Nimwegen E."/>
            <person name="Verardo R."/>
            <person name="Wei C.L."/>
            <person name="Yagi K."/>
            <person name="Yamanishi H."/>
            <person name="Zabarovsky E."/>
            <person name="Zhu S."/>
            <person name="Zimmer A."/>
            <person name="Hide W."/>
            <person name="Bult C."/>
            <person name="Grimmond S.M."/>
            <person name="Teasdale R.D."/>
            <person name="Liu E.T."/>
            <person name="Brusic V."/>
            <person name="Quackenbush J."/>
            <person name="Wahlestedt C."/>
            <person name="Mattick J.S."/>
            <person name="Hume D.A."/>
            <person name="Kai C."/>
            <person name="Sasaki D."/>
            <person name="Tomaru Y."/>
            <person name="Fukuda S."/>
            <person name="Kanamori-Katayama M."/>
            <person name="Suzuki M."/>
            <person name="Aoki J."/>
            <person name="Arakawa T."/>
            <person name="Iida J."/>
            <person name="Imamura K."/>
            <person name="Itoh M."/>
            <person name="Kato T."/>
            <person name="Kawaji H."/>
            <person name="Kawagashira N."/>
            <person name="Kawashima T."/>
            <person name="Kojima M."/>
            <person name="Kondo S."/>
            <person name="Konno H."/>
            <person name="Nakano K."/>
            <person name="Ninomiya N."/>
            <person name="Nishio T."/>
            <person name="Okada M."/>
            <person name="Plessy C."/>
            <person name="Shibata K."/>
            <person name="Shiraki T."/>
            <person name="Suzuki S."/>
            <person name="Tagami M."/>
            <person name="Waki K."/>
            <person name="Watahiki A."/>
            <person name="Okamura-Oho Y."/>
            <person name="Suzuki H."/>
            <person name="Kawai J."/>
            <person name="Hayashizaki Y."/>
        </authorList>
    </citation>
    <scope>NUCLEOTIDE SEQUENCE [LARGE SCALE MRNA]</scope>
    <source>
        <strain>C57BL/6J</strain>
        <tissue>Eye</tissue>
    </source>
</reference>
<reference key="2">
    <citation type="journal article" date="2009" name="PLoS Biol.">
        <title>Lineage-specific biology revealed by a finished genome assembly of the mouse.</title>
        <authorList>
            <person name="Church D.M."/>
            <person name="Goodstadt L."/>
            <person name="Hillier L.W."/>
            <person name="Zody M.C."/>
            <person name="Goldstein S."/>
            <person name="She X."/>
            <person name="Bult C.J."/>
            <person name="Agarwala R."/>
            <person name="Cherry J.L."/>
            <person name="DiCuccio M."/>
            <person name="Hlavina W."/>
            <person name="Kapustin Y."/>
            <person name="Meric P."/>
            <person name="Maglott D."/>
            <person name="Birtle Z."/>
            <person name="Marques A.C."/>
            <person name="Graves T."/>
            <person name="Zhou S."/>
            <person name="Teague B."/>
            <person name="Potamousis K."/>
            <person name="Churas C."/>
            <person name="Place M."/>
            <person name="Herschleb J."/>
            <person name="Runnheim R."/>
            <person name="Forrest D."/>
            <person name="Amos-Landgraf J."/>
            <person name="Schwartz D.C."/>
            <person name="Cheng Z."/>
            <person name="Lindblad-Toh K."/>
            <person name="Eichler E.E."/>
            <person name="Ponting C.P."/>
        </authorList>
    </citation>
    <scope>NUCLEOTIDE SEQUENCE [LARGE SCALE GENOMIC DNA]</scope>
    <source>
        <strain>C57BL/6J</strain>
    </source>
</reference>
<reference key="3">
    <citation type="submission" date="2005-07" db="EMBL/GenBank/DDBJ databases">
        <authorList>
            <person name="Mural R.J."/>
            <person name="Adams M.D."/>
            <person name="Myers E.W."/>
            <person name="Smith H.O."/>
            <person name="Venter J.C."/>
        </authorList>
    </citation>
    <scope>NUCLEOTIDE SEQUENCE [LARGE SCALE GENOMIC DNA]</scope>
</reference>
<reference key="4">
    <citation type="journal article" date="2012" name="PLoS ONE">
        <title>Identification of Peptide lv, a novel putative neuropeptide that regulates the expression of L-type voltage-gated calcium channels in photoreceptors.</title>
        <authorList>
            <person name="Shi L."/>
            <person name="Ko M.L."/>
            <person name="Abbott L.C."/>
            <person name="Ko G.Y."/>
        </authorList>
    </citation>
    <scope>MASS SPECTROMETRY</scope>
    <scope>SUBCELLULAR LOCATION OF LV PEPTIDE</scope>
    <scope>FUNCTION OF LV PEPTIDE</scope>
</reference>
<comment type="function">
    <text evidence="3">Peptide Lv enhances L-type voltage-gated calcium channel (L-VGCC) currents in retinal photoreceptors.</text>
</comment>
<comment type="subcellular location">
    <subcellularLocation>
        <location evidence="4">Cell membrane</location>
        <topology evidence="4">Single-pass type I membrane protein</topology>
    </subcellularLocation>
</comment>
<comment type="subcellular location">
    <molecule>Peptide Lv</molecule>
    <subcellularLocation>
        <location evidence="3">Secreted</location>
    </subcellularLocation>
</comment>
<comment type="tissue specificity">
    <text evidence="3">Peptide Lv is widely expressed in various tissues and the central nervous system, including the retinal photoreceptor layer, hippocampus, olfactory bulb, and cerebellum.</text>
</comment>
<comment type="PTM">
    <text evidence="3">Proteolytically cleaved to generate a bioactive peptide.</text>
</comment>
<comment type="mass spectrometry">
    <molecule>Peptide Lv</molecule>
</comment>
<gene>
    <name type="primary">Vstm4</name>
</gene>
<accession>T1NXB5</accession>
<feature type="signal peptide" evidence="1">
    <location>
        <begin position="1"/>
        <end position="23"/>
    </location>
</feature>
<feature type="chain" id="PRO_0000431304" description="V-set and transmembrane domain-containing protein 4" evidence="1">
    <location>
        <begin position="24"/>
        <end position="319"/>
    </location>
</feature>
<feature type="peptide" id="PRO_0000431305" description="Peptide Lv" evidence="3">
    <location>
        <begin position="55"/>
        <end position="103"/>
    </location>
</feature>
<feature type="transmembrane region" description="Helical" evidence="1">
    <location>
        <begin position="180"/>
        <end position="200"/>
    </location>
</feature>
<feature type="domain" description="Ig-like" evidence="2">
    <location>
        <begin position="24"/>
        <end position="154"/>
    </location>
</feature>
<feature type="glycosylation site" description="N-linked (GlcNAc...) asparagine" evidence="1">
    <location>
        <position position="25"/>
    </location>
</feature>
<feature type="glycosylation site" description="N-linked (GlcNAc...) asparagine" evidence="1">
    <location>
        <position position="41"/>
    </location>
</feature>
<feature type="glycosylation site" description="N-linked (GlcNAc...) asparagine" evidence="1">
    <location>
        <position position="143"/>
    </location>
</feature>
<feature type="disulfide bond" evidence="2">
    <location>
        <begin position="46"/>
        <end position="126"/>
    </location>
</feature>
<name>VSTM4_MOUSE</name>
<keyword id="KW-1003">Cell membrane</keyword>
<keyword id="KW-1015">Disulfide bond</keyword>
<keyword id="KW-0325">Glycoprotein</keyword>
<keyword id="KW-0393">Immunoglobulin domain</keyword>
<keyword id="KW-0472">Membrane</keyword>
<keyword id="KW-1185">Reference proteome</keyword>
<keyword id="KW-0964">Secreted</keyword>
<keyword id="KW-0732">Signal</keyword>
<keyword id="KW-0812">Transmembrane</keyword>
<keyword id="KW-1133">Transmembrane helix</keyword>
<organism>
    <name type="scientific">Mus musculus</name>
    <name type="common">Mouse</name>
    <dbReference type="NCBI Taxonomy" id="10090"/>
    <lineage>
        <taxon>Eukaryota</taxon>
        <taxon>Metazoa</taxon>
        <taxon>Chordata</taxon>
        <taxon>Craniata</taxon>
        <taxon>Vertebrata</taxon>
        <taxon>Euteleostomi</taxon>
        <taxon>Mammalia</taxon>
        <taxon>Eutheria</taxon>
        <taxon>Euarchontoglires</taxon>
        <taxon>Glires</taxon>
        <taxon>Rodentia</taxon>
        <taxon>Myomorpha</taxon>
        <taxon>Muroidea</taxon>
        <taxon>Muridae</taxon>
        <taxon>Murinae</taxon>
        <taxon>Mus</taxon>
        <taxon>Mus</taxon>
    </lineage>
</organism>
<protein>
    <recommendedName>
        <fullName>V-set and transmembrane domain-containing protein 4</fullName>
    </recommendedName>
    <component>
        <recommendedName>
            <fullName>Peptide Lv</fullName>
        </recommendedName>
    </component>
</protein>